<gene>
    <name type="primary">DIA3</name>
    <name type="ordered locus">YDL024C</name>
    <name type="ORF">D2815</name>
</gene>
<evidence type="ECO:0000250" key="1"/>
<evidence type="ECO:0000255" key="2"/>
<evidence type="ECO:0000305" key="3"/>
<keyword id="KW-0325">Glycoprotein</keyword>
<keyword id="KW-0378">Hydrolase</keyword>
<keyword id="KW-1185">Reference proteome</keyword>
<keyword id="KW-0732">Signal</keyword>
<reference key="1">
    <citation type="journal article" date="1997" name="Nature">
        <title>The nucleotide sequence of Saccharomyces cerevisiae chromosome IV.</title>
        <authorList>
            <person name="Jacq C."/>
            <person name="Alt-Moerbe J."/>
            <person name="Andre B."/>
            <person name="Arnold W."/>
            <person name="Bahr A."/>
            <person name="Ballesta J.P.G."/>
            <person name="Bargues M."/>
            <person name="Baron L."/>
            <person name="Becker A."/>
            <person name="Biteau N."/>
            <person name="Bloecker H."/>
            <person name="Blugeon C."/>
            <person name="Boskovic J."/>
            <person name="Brandt P."/>
            <person name="Brueckner M."/>
            <person name="Buitrago M.J."/>
            <person name="Coster F."/>
            <person name="Delaveau T."/>
            <person name="del Rey F."/>
            <person name="Dujon B."/>
            <person name="Eide L.G."/>
            <person name="Garcia-Cantalejo J.M."/>
            <person name="Goffeau A."/>
            <person name="Gomez-Peris A."/>
            <person name="Granotier C."/>
            <person name="Hanemann V."/>
            <person name="Hankeln T."/>
            <person name="Hoheisel J.D."/>
            <person name="Jaeger W."/>
            <person name="Jimenez A."/>
            <person name="Jonniaux J.-L."/>
            <person name="Kraemer C."/>
            <person name="Kuester H."/>
            <person name="Laamanen P."/>
            <person name="Legros Y."/>
            <person name="Louis E.J."/>
            <person name="Moeller-Rieker S."/>
            <person name="Monnet A."/>
            <person name="Moro M."/>
            <person name="Mueller-Auer S."/>
            <person name="Nussbaumer B."/>
            <person name="Paricio N."/>
            <person name="Paulin L."/>
            <person name="Perea J."/>
            <person name="Perez-Alonso M."/>
            <person name="Perez-Ortin J.E."/>
            <person name="Pohl T.M."/>
            <person name="Prydz H."/>
            <person name="Purnelle B."/>
            <person name="Rasmussen S.W."/>
            <person name="Remacha M.A."/>
            <person name="Revuelta J.L."/>
            <person name="Rieger M."/>
            <person name="Salom D."/>
            <person name="Saluz H.P."/>
            <person name="Saiz J.E."/>
            <person name="Saren A.-M."/>
            <person name="Schaefer M."/>
            <person name="Scharfe M."/>
            <person name="Schmidt E.R."/>
            <person name="Schneider C."/>
            <person name="Scholler P."/>
            <person name="Schwarz S."/>
            <person name="Soler-Mira A."/>
            <person name="Urrestarazu L.A."/>
            <person name="Verhasselt P."/>
            <person name="Vissers S."/>
            <person name="Voet M."/>
            <person name="Volckaert G."/>
            <person name="Wagner G."/>
            <person name="Wambutt R."/>
            <person name="Wedler E."/>
            <person name="Wedler H."/>
            <person name="Woelfl S."/>
            <person name="Harris D.E."/>
            <person name="Bowman S."/>
            <person name="Brown D."/>
            <person name="Churcher C.M."/>
            <person name="Connor R."/>
            <person name="Dedman K."/>
            <person name="Gentles S."/>
            <person name="Hamlin N."/>
            <person name="Hunt S."/>
            <person name="Jones L."/>
            <person name="McDonald S."/>
            <person name="Murphy L.D."/>
            <person name="Niblett D."/>
            <person name="Odell C."/>
            <person name="Oliver K."/>
            <person name="Rajandream M.A."/>
            <person name="Richards C."/>
            <person name="Shore L."/>
            <person name="Walsh S.V."/>
            <person name="Barrell B.G."/>
            <person name="Dietrich F.S."/>
            <person name="Mulligan J.T."/>
            <person name="Allen E."/>
            <person name="Araujo R."/>
            <person name="Aviles E."/>
            <person name="Berno A."/>
            <person name="Carpenter J."/>
            <person name="Chen E."/>
            <person name="Cherry J.M."/>
            <person name="Chung E."/>
            <person name="Duncan M."/>
            <person name="Hunicke-Smith S."/>
            <person name="Hyman R.W."/>
            <person name="Komp C."/>
            <person name="Lashkari D."/>
            <person name="Lew H."/>
            <person name="Lin D."/>
            <person name="Mosedale D."/>
            <person name="Nakahara K."/>
            <person name="Namath A."/>
            <person name="Oefner P."/>
            <person name="Oh C."/>
            <person name="Petel F.X."/>
            <person name="Roberts D."/>
            <person name="Schramm S."/>
            <person name="Schroeder M."/>
            <person name="Shogren T."/>
            <person name="Shroff N."/>
            <person name="Winant A."/>
            <person name="Yelton M.A."/>
            <person name="Botstein D."/>
            <person name="Davis R.W."/>
            <person name="Johnston M."/>
            <person name="Andrews S."/>
            <person name="Brinkman R."/>
            <person name="Cooper J."/>
            <person name="Ding H."/>
            <person name="Du Z."/>
            <person name="Favello A."/>
            <person name="Fulton L."/>
            <person name="Gattung S."/>
            <person name="Greco T."/>
            <person name="Hallsworth K."/>
            <person name="Hawkins J."/>
            <person name="Hillier L.W."/>
            <person name="Jier M."/>
            <person name="Johnson D."/>
            <person name="Johnston L."/>
            <person name="Kirsten J."/>
            <person name="Kucaba T."/>
            <person name="Langston Y."/>
            <person name="Latreille P."/>
            <person name="Le T."/>
            <person name="Mardis E."/>
            <person name="Menezes S."/>
            <person name="Miller N."/>
            <person name="Nhan M."/>
            <person name="Pauley A."/>
            <person name="Peluso D."/>
            <person name="Rifkin L."/>
            <person name="Riles L."/>
            <person name="Taich A."/>
            <person name="Trevaskis E."/>
            <person name="Vignati D."/>
            <person name="Wilcox L."/>
            <person name="Wohldman P."/>
            <person name="Vaudin M."/>
            <person name="Wilson R."/>
            <person name="Waterston R."/>
            <person name="Albermann K."/>
            <person name="Hani J."/>
            <person name="Heumann K."/>
            <person name="Kleine K."/>
            <person name="Mewes H.-W."/>
            <person name="Zollner A."/>
            <person name="Zaccaria P."/>
        </authorList>
    </citation>
    <scope>NUCLEOTIDE SEQUENCE [LARGE SCALE GENOMIC DNA]</scope>
    <source>
        <strain>ATCC 204508 / S288c</strain>
    </source>
</reference>
<reference key="2">
    <citation type="journal article" date="2014" name="G3 (Bethesda)">
        <title>The reference genome sequence of Saccharomyces cerevisiae: Then and now.</title>
        <authorList>
            <person name="Engel S.R."/>
            <person name="Dietrich F.S."/>
            <person name="Fisk D.G."/>
            <person name="Binkley G."/>
            <person name="Balakrishnan R."/>
            <person name="Costanzo M.C."/>
            <person name="Dwight S.S."/>
            <person name="Hitz B.C."/>
            <person name="Karra K."/>
            <person name="Nash R.S."/>
            <person name="Weng S."/>
            <person name="Wong E.D."/>
            <person name="Lloyd P."/>
            <person name="Skrzypek M.S."/>
            <person name="Miyasato S.R."/>
            <person name="Simison M."/>
            <person name="Cherry J.M."/>
        </authorList>
    </citation>
    <scope>GENOME REANNOTATION</scope>
    <source>
        <strain>ATCC 204508 / S288c</strain>
    </source>
</reference>
<accession>P52290</accession>
<accession>D6VRW7</accession>
<organism>
    <name type="scientific">Saccharomyces cerevisiae (strain ATCC 204508 / S288c)</name>
    <name type="common">Baker's yeast</name>
    <dbReference type="NCBI Taxonomy" id="559292"/>
    <lineage>
        <taxon>Eukaryota</taxon>
        <taxon>Fungi</taxon>
        <taxon>Dikarya</taxon>
        <taxon>Ascomycota</taxon>
        <taxon>Saccharomycotina</taxon>
        <taxon>Saccharomycetes</taxon>
        <taxon>Saccharomycetales</taxon>
        <taxon>Saccharomycetaceae</taxon>
        <taxon>Saccharomyces</taxon>
    </lineage>
</organism>
<sequence length="468" mass="53076">MVKPVIFAICLGVLLSKALSIPLRSFADIELIGSQKSLFPFLGGSAPYFSFPANYGIPTDIPEGCRLTQVQMIGRHGERYPTRSEAKDIFEVWYKISNYTGKYEGSLSFLNNGYEFFIPDESLLEMETTLQNSIDVLNPYTGEMNAKRHAREFLAKYGKLMENCTNFPIFTTNSKRIYDTAQYFAEALGDGFNISLQTLSENSSSGANTLAAKSSCPNWNSNANNDILMSYSRDYLENISDRLNDENKGLNLSRKDAAALFSWCAFELNAKGYSNICDIFSAAELIHYSYETDLTSFYQNGPGYKLIKSIGANLFNATVKLIRQSAHLDQKVWLSFTHDTDILNYLTTAGLIDDTRNLTTNHVPFRDHSYHRSWYIPQGARVYTEKFQCSNDSYVRYVVNDAVVPIESCSSGPGFSCEEGTFYEYAKDRLRGVSFYEDCDVSKVSKEKELTFYWDWNTTRYNASLVNQ</sequence>
<dbReference type="EC" id="3.1.3.2"/>
<dbReference type="EMBL" id="Z48432">
    <property type="protein sequence ID" value="CAA88335.1"/>
    <property type="molecule type" value="Genomic_DNA"/>
</dbReference>
<dbReference type="EMBL" id="Z74072">
    <property type="protein sequence ID" value="CAA98583.1"/>
    <property type="molecule type" value="Genomic_DNA"/>
</dbReference>
<dbReference type="EMBL" id="BK006938">
    <property type="protein sequence ID" value="DAA11827.1"/>
    <property type="molecule type" value="Genomic_DNA"/>
</dbReference>
<dbReference type="PIR" id="S52495">
    <property type="entry name" value="S52495"/>
</dbReference>
<dbReference type="RefSeq" id="NP_010260.1">
    <property type="nucleotide sequence ID" value="NM_001180083.1"/>
</dbReference>
<dbReference type="SMR" id="P52290"/>
<dbReference type="BioGRID" id="32031">
    <property type="interactions" value="28"/>
</dbReference>
<dbReference type="DIP" id="DIP-5014N"/>
<dbReference type="FunCoup" id="P52290">
    <property type="interactions" value="407"/>
</dbReference>
<dbReference type="IntAct" id="P52290">
    <property type="interactions" value="2"/>
</dbReference>
<dbReference type="STRING" id="4932.YDL024C"/>
<dbReference type="GlyCosmos" id="P52290">
    <property type="glycosylation" value="11 sites, No reported glycans"/>
</dbReference>
<dbReference type="GlyGen" id="P52290">
    <property type="glycosylation" value="11 sites"/>
</dbReference>
<dbReference type="PaxDb" id="4932-YDL024C"/>
<dbReference type="PeptideAtlas" id="P52290"/>
<dbReference type="EnsemblFungi" id="YDL024C_mRNA">
    <property type="protein sequence ID" value="YDL024C"/>
    <property type="gene ID" value="YDL024C"/>
</dbReference>
<dbReference type="GeneID" id="851537"/>
<dbReference type="KEGG" id="sce:YDL024C"/>
<dbReference type="AGR" id="SGD:S000002182"/>
<dbReference type="SGD" id="S000002182">
    <property type="gene designation" value="DIA3"/>
</dbReference>
<dbReference type="VEuPathDB" id="FungiDB:YDL024C"/>
<dbReference type="eggNOG" id="KOG1382">
    <property type="taxonomic scope" value="Eukaryota"/>
</dbReference>
<dbReference type="GeneTree" id="ENSGT00390000018409"/>
<dbReference type="HOGENOM" id="CLU_020880_3_1_1"/>
<dbReference type="InParanoid" id="P52290"/>
<dbReference type="OMA" id="RGYSPFC"/>
<dbReference type="OrthoDB" id="6509975at2759"/>
<dbReference type="BioCyc" id="YEAST:G3O-29451-MONOMER"/>
<dbReference type="BioGRID-ORCS" id="851537">
    <property type="hits" value="1 hit in 10 CRISPR screens"/>
</dbReference>
<dbReference type="PRO" id="PR:P52290"/>
<dbReference type="Proteomes" id="UP000002311">
    <property type="component" value="Chromosome IV"/>
</dbReference>
<dbReference type="RNAct" id="P52290">
    <property type="molecule type" value="protein"/>
</dbReference>
<dbReference type="GO" id="GO:0071944">
    <property type="term" value="C:cell periphery"/>
    <property type="evidence" value="ECO:0007005"/>
    <property type="project" value="SGD"/>
</dbReference>
<dbReference type="GO" id="GO:0009277">
    <property type="term" value="C:fungal-type cell wall"/>
    <property type="evidence" value="ECO:0000314"/>
    <property type="project" value="SGD"/>
</dbReference>
<dbReference type="GO" id="GO:0003993">
    <property type="term" value="F:acid phosphatase activity"/>
    <property type="evidence" value="ECO:0000250"/>
    <property type="project" value="SGD"/>
</dbReference>
<dbReference type="GO" id="GO:0001403">
    <property type="term" value="P:invasive growth in response to glucose limitation"/>
    <property type="evidence" value="ECO:0000316"/>
    <property type="project" value="SGD"/>
</dbReference>
<dbReference type="GO" id="GO:0007124">
    <property type="term" value="P:pseudohyphal growth"/>
    <property type="evidence" value="ECO:0000315"/>
    <property type="project" value="SGD"/>
</dbReference>
<dbReference type="CDD" id="cd07061">
    <property type="entry name" value="HP_HAP_like"/>
    <property type="match status" value="1"/>
</dbReference>
<dbReference type="FunFam" id="3.40.50.1240:FF:000021">
    <property type="entry name" value="Acid phosphatase"/>
    <property type="match status" value="1"/>
</dbReference>
<dbReference type="Gene3D" id="3.40.50.1240">
    <property type="entry name" value="Phosphoglycerate mutase-like"/>
    <property type="match status" value="1"/>
</dbReference>
<dbReference type="InterPro" id="IPR033379">
    <property type="entry name" value="Acid_Pase_AS"/>
</dbReference>
<dbReference type="InterPro" id="IPR000560">
    <property type="entry name" value="His_Pase_clade-2"/>
</dbReference>
<dbReference type="InterPro" id="IPR029033">
    <property type="entry name" value="His_PPase_superfam"/>
</dbReference>
<dbReference type="InterPro" id="IPR016274">
    <property type="entry name" value="Histidine_acid_Pase_euk"/>
</dbReference>
<dbReference type="PANTHER" id="PTHR20963:SF18">
    <property type="entry name" value="ACID PHOSPHATASE PHO11-RELATED"/>
    <property type="match status" value="1"/>
</dbReference>
<dbReference type="PANTHER" id="PTHR20963">
    <property type="entry name" value="MULTIPLE INOSITOL POLYPHOSPHATE PHOSPHATASE-RELATED"/>
    <property type="match status" value="1"/>
</dbReference>
<dbReference type="Pfam" id="PF00328">
    <property type="entry name" value="His_Phos_2"/>
    <property type="match status" value="1"/>
</dbReference>
<dbReference type="PIRSF" id="PIRSF000894">
    <property type="entry name" value="Acid_phosphatase"/>
    <property type="match status" value="1"/>
</dbReference>
<dbReference type="SUPFAM" id="SSF53254">
    <property type="entry name" value="Phosphoglycerate mutase-like"/>
    <property type="match status" value="1"/>
</dbReference>
<dbReference type="PROSITE" id="PS00616">
    <property type="entry name" value="HIS_ACID_PHOSPHAT_1"/>
    <property type="match status" value="1"/>
</dbReference>
<dbReference type="PROSITE" id="PS00778">
    <property type="entry name" value="HIS_ACID_PHOSPHAT_2"/>
    <property type="match status" value="1"/>
</dbReference>
<proteinExistence type="inferred from homology"/>
<comment type="catalytic activity">
    <reaction>
        <text>a phosphate monoester + H2O = an alcohol + phosphate</text>
        <dbReference type="Rhea" id="RHEA:15017"/>
        <dbReference type="ChEBI" id="CHEBI:15377"/>
        <dbReference type="ChEBI" id="CHEBI:30879"/>
        <dbReference type="ChEBI" id="CHEBI:43474"/>
        <dbReference type="ChEBI" id="CHEBI:67140"/>
        <dbReference type="EC" id="3.1.3.2"/>
    </reaction>
</comment>
<comment type="similarity">
    <text evidence="3">Belongs to the histidine acid phosphatase family.</text>
</comment>
<protein>
    <recommendedName>
        <fullName>Probable acid phosphatase DIA3</fullName>
        <ecNumber>3.1.3.2</ecNumber>
    </recommendedName>
    <alternativeName>
        <fullName>Digs into agar protein 3</fullName>
    </alternativeName>
</protein>
<feature type="signal peptide" evidence="1">
    <location>
        <begin position="1"/>
        <end position="20"/>
    </location>
</feature>
<feature type="chain" id="PRO_0000023958" description="Probable acid phosphatase DIA3">
    <location>
        <begin position="21"/>
        <end position="468"/>
    </location>
</feature>
<feature type="active site" description="Nucleophile" evidence="1">
    <location>
        <position position="76"/>
    </location>
</feature>
<feature type="active site" description="Proton donor" evidence="1">
    <location>
        <position position="339"/>
    </location>
</feature>
<feature type="glycosylation site" description="N-linked (GlcNAc...) asparagine" evidence="2">
    <location>
        <position position="98"/>
    </location>
</feature>
<feature type="glycosylation site" description="N-linked (GlcNAc...) asparagine" evidence="2">
    <location>
        <position position="163"/>
    </location>
</feature>
<feature type="glycosylation site" description="N-linked (GlcNAc...) asparagine" evidence="2">
    <location>
        <position position="193"/>
    </location>
</feature>
<feature type="glycosylation site" description="N-linked (GlcNAc...) asparagine" evidence="2">
    <location>
        <position position="202"/>
    </location>
</feature>
<feature type="glycosylation site" description="N-linked (GlcNAc...) asparagine" evidence="2">
    <location>
        <position position="238"/>
    </location>
</feature>
<feature type="glycosylation site" description="N-linked (GlcNAc...) asparagine" evidence="2">
    <location>
        <position position="251"/>
    </location>
</feature>
<feature type="glycosylation site" description="N-linked (GlcNAc...) asparagine" evidence="2">
    <location>
        <position position="316"/>
    </location>
</feature>
<feature type="glycosylation site" description="N-linked (GlcNAc...) asparagine" evidence="2">
    <location>
        <position position="357"/>
    </location>
</feature>
<feature type="glycosylation site" description="N-linked (GlcNAc...) asparagine" evidence="2">
    <location>
        <position position="391"/>
    </location>
</feature>
<feature type="glycosylation site" description="N-linked (GlcNAc...) asparagine" evidence="2">
    <location>
        <position position="457"/>
    </location>
</feature>
<feature type="glycosylation site" description="N-linked (GlcNAc...) asparagine" evidence="2">
    <location>
        <position position="462"/>
    </location>
</feature>
<name>PPAD_YEAST</name>